<reference key="1">
    <citation type="journal article" date="2007" name="J. Bacteriol.">
        <title>Complete genome of acute rheumatic fever-associated serotype M5 Streptococcus pyogenes strain Manfredo.</title>
        <authorList>
            <person name="Holden M.T.G."/>
            <person name="Scott A."/>
            <person name="Cherevach I."/>
            <person name="Chillingworth T."/>
            <person name="Churcher C."/>
            <person name="Cronin A."/>
            <person name="Dowd L."/>
            <person name="Feltwell T."/>
            <person name="Hamlin N."/>
            <person name="Holroyd S."/>
            <person name="Jagels K."/>
            <person name="Moule S."/>
            <person name="Mungall K."/>
            <person name="Quail M.A."/>
            <person name="Price C."/>
            <person name="Rabbinowitsch E."/>
            <person name="Sharp S."/>
            <person name="Skelton J."/>
            <person name="Whitehead S."/>
            <person name="Barrell B.G."/>
            <person name="Kehoe M."/>
            <person name="Parkhill J."/>
        </authorList>
    </citation>
    <scope>NUCLEOTIDE SEQUENCE [LARGE SCALE GENOMIC DNA]</scope>
    <source>
        <strain>Manfredo</strain>
    </source>
</reference>
<comment type="catalytic activity">
    <reaction evidence="1">
        <text>L-aspartate + NH4(+) + ATP = L-asparagine + AMP + diphosphate + H(+)</text>
        <dbReference type="Rhea" id="RHEA:11372"/>
        <dbReference type="ChEBI" id="CHEBI:15378"/>
        <dbReference type="ChEBI" id="CHEBI:28938"/>
        <dbReference type="ChEBI" id="CHEBI:29991"/>
        <dbReference type="ChEBI" id="CHEBI:30616"/>
        <dbReference type="ChEBI" id="CHEBI:33019"/>
        <dbReference type="ChEBI" id="CHEBI:58048"/>
        <dbReference type="ChEBI" id="CHEBI:456215"/>
        <dbReference type="EC" id="6.3.1.1"/>
    </reaction>
</comment>
<comment type="pathway">
    <text evidence="1">Amino-acid biosynthesis; L-asparagine biosynthesis; L-asparagine from L-aspartate (ammonia route): step 1/1.</text>
</comment>
<comment type="subcellular location">
    <subcellularLocation>
        <location evidence="1">Cytoplasm</location>
    </subcellularLocation>
</comment>
<comment type="similarity">
    <text evidence="1">Belongs to the class-II aminoacyl-tRNA synthetase family. AsnA subfamily.</text>
</comment>
<keyword id="KW-0028">Amino-acid biosynthesis</keyword>
<keyword id="KW-0061">Asparagine biosynthesis</keyword>
<keyword id="KW-0067">ATP-binding</keyword>
<keyword id="KW-0963">Cytoplasm</keyword>
<keyword id="KW-0436">Ligase</keyword>
<keyword id="KW-0547">Nucleotide-binding</keyword>
<gene>
    <name evidence="1" type="primary">asnA</name>
    <name type="ordered locus">SpyM50584</name>
</gene>
<proteinExistence type="inferred from homology"/>
<feature type="chain" id="PRO_1000017969" description="Aspartate--ammonia ligase">
    <location>
        <begin position="1"/>
        <end position="330"/>
    </location>
</feature>
<accession>A2RDJ5</accession>
<dbReference type="EC" id="6.3.1.1" evidence="1"/>
<dbReference type="EMBL" id="AM295007">
    <property type="protein sequence ID" value="CAM29920.1"/>
    <property type="molecule type" value="Genomic_DNA"/>
</dbReference>
<dbReference type="RefSeq" id="WP_011888731.1">
    <property type="nucleotide sequence ID" value="NC_009332.1"/>
</dbReference>
<dbReference type="SMR" id="A2RDJ5"/>
<dbReference type="KEGG" id="spf:SpyM50584"/>
<dbReference type="HOGENOM" id="CLU_071543_0_0_9"/>
<dbReference type="UniPathway" id="UPA00134">
    <property type="reaction ID" value="UER00194"/>
</dbReference>
<dbReference type="GO" id="GO:0005829">
    <property type="term" value="C:cytosol"/>
    <property type="evidence" value="ECO:0007669"/>
    <property type="project" value="TreeGrafter"/>
</dbReference>
<dbReference type="GO" id="GO:0004071">
    <property type="term" value="F:aspartate-ammonia ligase activity"/>
    <property type="evidence" value="ECO:0007669"/>
    <property type="project" value="UniProtKB-UniRule"/>
</dbReference>
<dbReference type="GO" id="GO:0005524">
    <property type="term" value="F:ATP binding"/>
    <property type="evidence" value="ECO:0007669"/>
    <property type="project" value="UniProtKB-UniRule"/>
</dbReference>
<dbReference type="GO" id="GO:0140096">
    <property type="term" value="F:catalytic activity, acting on a protein"/>
    <property type="evidence" value="ECO:0007669"/>
    <property type="project" value="UniProtKB-ARBA"/>
</dbReference>
<dbReference type="GO" id="GO:0016740">
    <property type="term" value="F:transferase activity"/>
    <property type="evidence" value="ECO:0007669"/>
    <property type="project" value="UniProtKB-ARBA"/>
</dbReference>
<dbReference type="GO" id="GO:0070981">
    <property type="term" value="P:L-asparagine biosynthetic process"/>
    <property type="evidence" value="ECO:0007669"/>
    <property type="project" value="UniProtKB-UniRule"/>
</dbReference>
<dbReference type="CDD" id="cd00645">
    <property type="entry name" value="AsnA"/>
    <property type="match status" value="1"/>
</dbReference>
<dbReference type="Gene3D" id="3.30.930.10">
    <property type="entry name" value="Bira Bifunctional Protein, Domain 2"/>
    <property type="match status" value="1"/>
</dbReference>
<dbReference type="HAMAP" id="MF_00555">
    <property type="entry name" value="AsnA"/>
    <property type="match status" value="1"/>
</dbReference>
<dbReference type="InterPro" id="IPR006195">
    <property type="entry name" value="aa-tRNA-synth_II"/>
</dbReference>
<dbReference type="InterPro" id="IPR045864">
    <property type="entry name" value="aa-tRNA-synth_II/BPL/LPL"/>
</dbReference>
<dbReference type="InterPro" id="IPR004618">
    <property type="entry name" value="AsnA"/>
</dbReference>
<dbReference type="NCBIfam" id="TIGR00669">
    <property type="entry name" value="asnA"/>
    <property type="match status" value="1"/>
</dbReference>
<dbReference type="PANTHER" id="PTHR30073">
    <property type="entry name" value="ASPARTATE--AMMONIA LIGASE"/>
    <property type="match status" value="1"/>
</dbReference>
<dbReference type="PANTHER" id="PTHR30073:SF5">
    <property type="entry name" value="ASPARTATE--AMMONIA LIGASE"/>
    <property type="match status" value="1"/>
</dbReference>
<dbReference type="Pfam" id="PF03590">
    <property type="entry name" value="AsnA"/>
    <property type="match status" value="1"/>
</dbReference>
<dbReference type="PIRSF" id="PIRSF001555">
    <property type="entry name" value="Asp_ammon_ligase"/>
    <property type="match status" value="1"/>
</dbReference>
<dbReference type="SUPFAM" id="SSF55681">
    <property type="entry name" value="Class II aaRS and biotin synthetases"/>
    <property type="match status" value="1"/>
</dbReference>
<dbReference type="PROSITE" id="PS50862">
    <property type="entry name" value="AA_TRNA_LIGASE_II"/>
    <property type="match status" value="1"/>
</dbReference>
<sequence length="330" mass="37400">MKKSFIHQQEEISFVKNTFTQYLIAKLDVVEVQGPILSRVGDGMQDNLSGTENPVSVNVLKIPNATFEVVHSLAKWKRHTLARFGFNEGEGLVVNMKALRPDEDSLDQTHSVYVDQWDWEKVIPDGKRNLAYLKETVETIYKVIRLTELAVEARYDIEAVLPKKITFIHTEELVAEYPDLTPKERENAITKEFGAVFLIGIGGVLPDGKPHDGRAPDYDDWTTETENGYHGLNGDILVWNDQLGSAFELSSMGIRVDEEALKRQVEMTGDQDRLAFDWHKSLLNGLFPLTIGGGIGQSRMVMFLLRKKHIGEVQTSVWPQEVRDSYDNIL</sequence>
<name>ASNA_STRPG</name>
<organism>
    <name type="scientific">Streptococcus pyogenes serotype M5 (strain Manfredo)</name>
    <dbReference type="NCBI Taxonomy" id="160491"/>
    <lineage>
        <taxon>Bacteria</taxon>
        <taxon>Bacillati</taxon>
        <taxon>Bacillota</taxon>
        <taxon>Bacilli</taxon>
        <taxon>Lactobacillales</taxon>
        <taxon>Streptococcaceae</taxon>
        <taxon>Streptococcus</taxon>
    </lineage>
</organism>
<protein>
    <recommendedName>
        <fullName evidence="1">Aspartate--ammonia ligase</fullName>
        <ecNumber evidence="1">6.3.1.1</ecNumber>
    </recommendedName>
    <alternativeName>
        <fullName evidence="1">Asparagine synthetase A</fullName>
    </alternativeName>
</protein>
<evidence type="ECO:0000255" key="1">
    <source>
        <dbReference type="HAMAP-Rule" id="MF_00555"/>
    </source>
</evidence>